<protein>
    <recommendedName>
        <fullName evidence="5">Carboxylesterase SOBER1</fullName>
        <ecNumber evidence="2 3">3.1.1.-</ecNumber>
    </recommendedName>
    <alternativeName>
        <fullName evidence="5">Phospholipase A2 SOBER1</fullName>
    </alternativeName>
    <alternativeName>
        <fullName evidence="4">Protein SUPPRESSOR OF AVRBST-ELICITED RESISTANCE 1</fullName>
    </alternativeName>
</protein>
<keyword id="KW-0002">3D-structure</keyword>
<keyword id="KW-0276">Fatty acid metabolism</keyword>
<keyword id="KW-0378">Hydrolase</keyword>
<keyword id="KW-0443">Lipid metabolism</keyword>
<keyword id="KW-0611">Plant defense</keyword>
<keyword id="KW-1185">Reference proteome</keyword>
<organism>
    <name type="scientific">Arabidopsis thaliana</name>
    <name type="common">Mouse-ear cress</name>
    <dbReference type="NCBI Taxonomy" id="3702"/>
    <lineage>
        <taxon>Eukaryota</taxon>
        <taxon>Viridiplantae</taxon>
        <taxon>Streptophyta</taxon>
        <taxon>Embryophyta</taxon>
        <taxon>Tracheophyta</taxon>
        <taxon>Spermatophyta</taxon>
        <taxon>Magnoliopsida</taxon>
        <taxon>eudicotyledons</taxon>
        <taxon>Gunneridae</taxon>
        <taxon>Pentapetalae</taxon>
        <taxon>rosids</taxon>
        <taxon>malvids</taxon>
        <taxon>Brassicales</taxon>
        <taxon>Brassicaceae</taxon>
        <taxon>Camelineae</taxon>
        <taxon>Arabidopsis</taxon>
    </lineage>
</organism>
<sequence length="228" mass="24845">MARTFILWLHGLGDSGPANEPIQTQFKSSELSNASWLFPSAPFNPVTCNNGAVMRSWFDVPELPFKVGSPIDESSVLEAVKNVHAIIDQEIAEGTNPENVFICGLSQGGALTLASVLLYPKTLGGGAVLSGWVPFTSSIISQFPEEAKKTPILWSHGTDDRMVLFEAGQAALPFLKEAGVTCEFKAYPGLGHSISNKELKYIESWIKRRLKGSSSTCLQLNCLKEMFH</sequence>
<name>SOBR1_ARATH</name>
<dbReference type="EC" id="3.1.1.-" evidence="2 3"/>
<dbReference type="EMBL" id="EF100725">
    <property type="protein sequence ID" value="ABO26813.1"/>
    <property type="molecule type" value="mRNA"/>
</dbReference>
<dbReference type="EMBL" id="AL021712">
    <property type="protein sequence ID" value="CAA16780.1"/>
    <property type="status" value="ALT_SEQ"/>
    <property type="molecule type" value="Genomic_DNA"/>
</dbReference>
<dbReference type="EMBL" id="AL161557">
    <property type="protein sequence ID" value="CAB79185.1"/>
    <property type="status" value="ALT_SEQ"/>
    <property type="molecule type" value="Genomic_DNA"/>
</dbReference>
<dbReference type="EMBL" id="CP002687">
    <property type="protein sequence ID" value="AEE84590.1"/>
    <property type="molecule type" value="Genomic_DNA"/>
</dbReference>
<dbReference type="EMBL" id="BT003123">
    <property type="protein sequence ID" value="AAO24555.1"/>
    <property type="molecule type" value="mRNA"/>
</dbReference>
<dbReference type="EMBL" id="AK227671">
    <property type="protein sequence ID" value="BAE99658.1"/>
    <property type="molecule type" value="mRNA"/>
</dbReference>
<dbReference type="PIR" id="T04911">
    <property type="entry name" value="T04911"/>
</dbReference>
<dbReference type="RefSeq" id="NP_001190797.1">
    <property type="nucleotide sequence ID" value="NM_001203868.2"/>
</dbReference>
<dbReference type="PDB" id="6AVV">
    <property type="method" value="X-ray"/>
    <property type="resolution" value="1.51 A"/>
    <property type="chains" value="A=1-228"/>
</dbReference>
<dbReference type="PDB" id="6AVW">
    <property type="method" value="X-ray"/>
    <property type="resolution" value="2.14 A"/>
    <property type="chains" value="A=1-228"/>
</dbReference>
<dbReference type="PDB" id="6AVX">
    <property type="method" value="X-ray"/>
    <property type="resolution" value="1.27 A"/>
    <property type="chains" value="A=1-228"/>
</dbReference>
<dbReference type="PDBsum" id="6AVV"/>
<dbReference type="PDBsum" id="6AVW"/>
<dbReference type="PDBsum" id="6AVX"/>
<dbReference type="SMR" id="Q84WK4"/>
<dbReference type="FunCoup" id="Q84WK4">
    <property type="interactions" value="15"/>
</dbReference>
<dbReference type="STRING" id="3702.Q84WK4"/>
<dbReference type="ESTHER" id="arath-SOBR1">
    <property type="family name" value="LYsophospholipase_carboxylesterase"/>
</dbReference>
<dbReference type="PaxDb" id="3702-AT4G22305.1"/>
<dbReference type="ProteomicsDB" id="232599"/>
<dbReference type="EnsemblPlants" id="AT4G22305.1">
    <property type="protein sequence ID" value="AT4G22305.1"/>
    <property type="gene ID" value="AT4G22305"/>
</dbReference>
<dbReference type="GeneID" id="10723040"/>
<dbReference type="Gramene" id="AT4G22305.1">
    <property type="protein sequence ID" value="AT4G22305.1"/>
    <property type="gene ID" value="AT4G22305"/>
</dbReference>
<dbReference type="KEGG" id="ath:AT4G22305"/>
<dbReference type="Araport" id="AT4G22305"/>
<dbReference type="TAIR" id="AT4G22305">
    <property type="gene designation" value="SOBER1"/>
</dbReference>
<dbReference type="eggNOG" id="KOG2112">
    <property type="taxonomic scope" value="Eukaryota"/>
</dbReference>
<dbReference type="HOGENOM" id="CLU_049413_1_0_1"/>
<dbReference type="InParanoid" id="Q84WK4"/>
<dbReference type="OMA" id="WHEYPIA"/>
<dbReference type="OrthoDB" id="2418081at2759"/>
<dbReference type="PRO" id="PR:Q84WK4"/>
<dbReference type="Proteomes" id="UP000006548">
    <property type="component" value="Chromosome 4"/>
</dbReference>
<dbReference type="ExpressionAtlas" id="Q84WK4">
    <property type="expression patterns" value="baseline and differential"/>
</dbReference>
<dbReference type="GO" id="GO:0052689">
    <property type="term" value="F:carboxylic ester hydrolase activity"/>
    <property type="evidence" value="ECO:0000314"/>
    <property type="project" value="TAIR"/>
</dbReference>
<dbReference type="GO" id="GO:0004623">
    <property type="term" value="F:phospholipase A2 activity"/>
    <property type="evidence" value="ECO:0000314"/>
    <property type="project" value="UniProtKB"/>
</dbReference>
<dbReference type="GO" id="GO:0034338">
    <property type="term" value="F:short-chain carboxylesterase activity"/>
    <property type="evidence" value="ECO:0000314"/>
    <property type="project" value="UniProtKB"/>
</dbReference>
<dbReference type="GO" id="GO:0042742">
    <property type="term" value="P:defense response to bacterium"/>
    <property type="evidence" value="ECO:0000315"/>
    <property type="project" value="UniProtKB"/>
</dbReference>
<dbReference type="GO" id="GO:0098542">
    <property type="term" value="P:defense response to other organism"/>
    <property type="evidence" value="ECO:0000315"/>
    <property type="project" value="TAIR"/>
</dbReference>
<dbReference type="GO" id="GO:0006631">
    <property type="term" value="P:fatty acid metabolic process"/>
    <property type="evidence" value="ECO:0007669"/>
    <property type="project" value="UniProtKB-KW"/>
</dbReference>
<dbReference type="GO" id="GO:0006654">
    <property type="term" value="P:phosphatidic acid biosynthetic process"/>
    <property type="evidence" value="ECO:0000314"/>
    <property type="project" value="UniProtKB"/>
</dbReference>
<dbReference type="GO" id="GO:0010363">
    <property type="term" value="P:regulation of plant-type hypersensitive response"/>
    <property type="evidence" value="ECO:0000315"/>
    <property type="project" value="TAIR"/>
</dbReference>
<dbReference type="FunFam" id="3.40.50.1820:FF:000232">
    <property type="entry name" value="Probable carboxylesterase SOBER1-like"/>
    <property type="match status" value="1"/>
</dbReference>
<dbReference type="Gene3D" id="3.40.50.1820">
    <property type="entry name" value="alpha/beta hydrolase"/>
    <property type="match status" value="1"/>
</dbReference>
<dbReference type="InterPro" id="IPR029058">
    <property type="entry name" value="AB_hydrolase_fold"/>
</dbReference>
<dbReference type="InterPro" id="IPR050565">
    <property type="entry name" value="LYPA1-2/EST-like"/>
</dbReference>
<dbReference type="InterPro" id="IPR003140">
    <property type="entry name" value="PLipase/COase/thioEstase"/>
</dbReference>
<dbReference type="PANTHER" id="PTHR10655:SF62">
    <property type="entry name" value="CARBOXYLESTERASE SOBER1"/>
    <property type="match status" value="1"/>
</dbReference>
<dbReference type="PANTHER" id="PTHR10655">
    <property type="entry name" value="LYSOPHOSPHOLIPASE-RELATED"/>
    <property type="match status" value="1"/>
</dbReference>
<dbReference type="Pfam" id="PF02230">
    <property type="entry name" value="Abhydrolase_2"/>
    <property type="match status" value="1"/>
</dbReference>
<dbReference type="SUPFAM" id="SSF53474">
    <property type="entry name" value="alpha/beta-Hydrolases"/>
    <property type="match status" value="1"/>
</dbReference>
<feature type="chain" id="PRO_0000433446" description="Carboxylesterase SOBER1">
    <location>
        <begin position="1"/>
        <end position="228"/>
    </location>
</feature>
<feature type="active site" description="Charge relay system" evidence="1">
    <location>
        <position position="106"/>
    </location>
</feature>
<feature type="active site" description="Charge relay system" evidence="1">
    <location>
        <position position="160"/>
    </location>
</feature>
<feature type="active site" description="Charge relay system" evidence="1">
    <location>
        <position position="192"/>
    </location>
</feature>
<feature type="mutagenesis site" description="Loss of catalytic activity." evidence="2">
    <original>S</original>
    <variation>A</variation>
    <location>
        <position position="106"/>
    </location>
</feature>
<feature type="mutagenesis site" description="Loss of catalytic activity." evidence="2 3">
    <original>H</original>
    <variation>A</variation>
    <location>
        <position position="192"/>
    </location>
</feature>
<feature type="sequence conflict" description="In Ref. 1; ABO26813." evidence="5" ref="1">
    <original>S</original>
    <variation>C</variation>
    <location>
        <position position="155"/>
    </location>
</feature>
<feature type="strand" evidence="7">
    <location>
        <begin position="5"/>
        <end position="9"/>
    </location>
</feature>
<feature type="helix" evidence="7">
    <location>
        <begin position="16"/>
        <end position="19"/>
    </location>
</feature>
<feature type="helix" evidence="7">
    <location>
        <begin position="20"/>
        <end position="25"/>
    </location>
</feature>
<feature type="turn" evidence="7">
    <location>
        <begin position="29"/>
        <end position="33"/>
    </location>
</feature>
<feature type="strand" evidence="7">
    <location>
        <begin position="35"/>
        <end position="37"/>
    </location>
</feature>
<feature type="strand" evidence="7">
    <location>
        <begin position="43"/>
        <end position="45"/>
    </location>
</feature>
<feature type="helix" evidence="7">
    <location>
        <begin position="47"/>
        <end position="49"/>
    </location>
</feature>
<feature type="strand" evidence="7">
    <location>
        <begin position="53"/>
        <end position="55"/>
    </location>
</feature>
<feature type="strand" evidence="7">
    <location>
        <begin position="62"/>
        <end position="65"/>
    </location>
</feature>
<feature type="helix" evidence="7">
    <location>
        <begin position="73"/>
        <end position="92"/>
    </location>
</feature>
<feature type="helix" evidence="7">
    <location>
        <begin position="97"/>
        <end position="99"/>
    </location>
</feature>
<feature type="strand" evidence="7">
    <location>
        <begin position="100"/>
        <end position="105"/>
    </location>
</feature>
<feature type="helix" evidence="7">
    <location>
        <begin position="107"/>
        <end position="118"/>
    </location>
</feature>
<feature type="strand" evidence="7">
    <location>
        <begin position="124"/>
        <end position="130"/>
    </location>
</feature>
<feature type="helix" evidence="7">
    <location>
        <begin position="137"/>
        <end position="142"/>
    </location>
</feature>
<feature type="helix" evidence="7">
    <location>
        <begin position="146"/>
        <end position="149"/>
    </location>
</feature>
<feature type="strand" evidence="7">
    <location>
        <begin position="152"/>
        <end position="157"/>
    </location>
</feature>
<feature type="helix" evidence="7">
    <location>
        <begin position="165"/>
        <end position="169"/>
    </location>
</feature>
<feature type="helix" evidence="7">
    <location>
        <begin position="171"/>
        <end position="178"/>
    </location>
</feature>
<feature type="strand" evidence="7">
    <location>
        <begin position="182"/>
        <end position="187"/>
    </location>
</feature>
<feature type="helix" evidence="7">
    <location>
        <begin position="196"/>
        <end position="210"/>
    </location>
</feature>
<comment type="function">
    <text evidence="2 3">Possesses carboxylesterase activity in vitro with a preference for short acyl chain substrates. Functions as a negative regulator of the hypersensitive response (HR) triggered by the bacterial type III effector protein AvrBsT (PubMed:17293566). Possesses phospholipase A2 (PLA2) activity and hydrolyzes phosphatidylcholine (PC), a lipid that is hydrolyzed by phospholipase D (PLD) to produce phosphatidic acid (PA). Required to suppress AvrBsT-dependent HR and PLD-dependent production of PA in response to AvrBsT elicitation (PubMed:19918071).</text>
</comment>
<comment type="disruption phenotype">
    <text evidence="2">No visible phenotype under normal growth conditions, but mutant plants show hypersensitive response to infection with the bacterial pathogen Xanthomonas campestris pv. vesicatoria containing the type III effector protein AvrBsT.</text>
</comment>
<comment type="similarity">
    <text evidence="5">Belongs to the AB hydrolase superfamily. AB hydrolase 2 family.</text>
</comment>
<comment type="sequence caution" evidence="5">
    <conflict type="erroneous gene model prediction">
        <sequence resource="EMBL-CDS" id="CAA16780"/>
    </conflict>
</comment>
<comment type="sequence caution" evidence="5">
    <conflict type="erroneous gene model prediction">
        <sequence resource="EMBL-CDS" id="CAB79185"/>
    </conflict>
</comment>
<gene>
    <name evidence="4" type="primary">SOBER1</name>
    <name evidence="6" type="ordered locus">At4g22305</name>
</gene>
<evidence type="ECO:0000250" key="1">
    <source>
        <dbReference type="UniProtKB" id="O75608"/>
    </source>
</evidence>
<evidence type="ECO:0000269" key="2">
    <source>
    </source>
</evidence>
<evidence type="ECO:0000269" key="3">
    <source>
    </source>
</evidence>
<evidence type="ECO:0000303" key="4">
    <source>
    </source>
</evidence>
<evidence type="ECO:0000305" key="5"/>
<evidence type="ECO:0000312" key="6">
    <source>
        <dbReference type="Araport" id="AT4G22305"/>
    </source>
</evidence>
<evidence type="ECO:0007829" key="7">
    <source>
        <dbReference type="PDB" id="6AVX"/>
    </source>
</evidence>
<proteinExistence type="evidence at protein level"/>
<reference key="1">
    <citation type="journal article" date="2007" name="Plant Cell">
        <title>A conserved carboxylesterase is a SUPPRESSOR OF AVRBST-ELICITED RESISTANCE in Arabidopsis.</title>
        <authorList>
            <person name="Cunnac S."/>
            <person name="Wilson A."/>
            <person name="Nuwer J."/>
            <person name="Kirik A."/>
            <person name="Baranage G."/>
            <person name="Mudgett M.B."/>
        </authorList>
    </citation>
    <scope>NUCLEOTIDE SEQUENCE [MRNA]</scope>
    <scope>FUNCTION</scope>
    <scope>DISRUPTION PHENOTYPE</scope>
    <scope>MUTAGENESIS OF SER-106 AND HIS-192</scope>
    <source>
        <strain>cv. Columbia</strain>
    </source>
</reference>
<reference key="2">
    <citation type="journal article" date="1999" name="Nature">
        <title>Sequence and analysis of chromosome 4 of the plant Arabidopsis thaliana.</title>
        <authorList>
            <person name="Mayer K.F.X."/>
            <person name="Schueller C."/>
            <person name="Wambutt R."/>
            <person name="Murphy G."/>
            <person name="Volckaert G."/>
            <person name="Pohl T."/>
            <person name="Duesterhoeft A."/>
            <person name="Stiekema W."/>
            <person name="Entian K.-D."/>
            <person name="Terryn N."/>
            <person name="Harris B."/>
            <person name="Ansorge W."/>
            <person name="Brandt P."/>
            <person name="Grivell L.A."/>
            <person name="Rieger M."/>
            <person name="Weichselgartner M."/>
            <person name="de Simone V."/>
            <person name="Obermaier B."/>
            <person name="Mache R."/>
            <person name="Mueller M."/>
            <person name="Kreis M."/>
            <person name="Delseny M."/>
            <person name="Puigdomenech P."/>
            <person name="Watson M."/>
            <person name="Schmidtheini T."/>
            <person name="Reichert B."/>
            <person name="Portetelle D."/>
            <person name="Perez-Alonso M."/>
            <person name="Boutry M."/>
            <person name="Bancroft I."/>
            <person name="Vos P."/>
            <person name="Hoheisel J."/>
            <person name="Zimmermann W."/>
            <person name="Wedler H."/>
            <person name="Ridley P."/>
            <person name="Langham S.-A."/>
            <person name="McCullagh B."/>
            <person name="Bilham L."/>
            <person name="Robben J."/>
            <person name="van der Schueren J."/>
            <person name="Grymonprez B."/>
            <person name="Chuang Y.-J."/>
            <person name="Vandenbussche F."/>
            <person name="Braeken M."/>
            <person name="Weltjens I."/>
            <person name="Voet M."/>
            <person name="Bastiaens I."/>
            <person name="Aert R."/>
            <person name="Defoor E."/>
            <person name="Weitzenegger T."/>
            <person name="Bothe G."/>
            <person name="Ramsperger U."/>
            <person name="Hilbert H."/>
            <person name="Braun M."/>
            <person name="Holzer E."/>
            <person name="Brandt A."/>
            <person name="Peters S."/>
            <person name="van Staveren M."/>
            <person name="Dirkse W."/>
            <person name="Mooijman P."/>
            <person name="Klein Lankhorst R."/>
            <person name="Rose M."/>
            <person name="Hauf J."/>
            <person name="Koetter P."/>
            <person name="Berneiser S."/>
            <person name="Hempel S."/>
            <person name="Feldpausch M."/>
            <person name="Lamberth S."/>
            <person name="Van den Daele H."/>
            <person name="De Keyser A."/>
            <person name="Buysshaert C."/>
            <person name="Gielen J."/>
            <person name="Villarroel R."/>
            <person name="De Clercq R."/>
            <person name="van Montagu M."/>
            <person name="Rogers J."/>
            <person name="Cronin A."/>
            <person name="Quail M.A."/>
            <person name="Bray-Allen S."/>
            <person name="Clark L."/>
            <person name="Doggett J."/>
            <person name="Hall S."/>
            <person name="Kay M."/>
            <person name="Lennard N."/>
            <person name="McLay K."/>
            <person name="Mayes R."/>
            <person name="Pettett A."/>
            <person name="Rajandream M.A."/>
            <person name="Lyne M."/>
            <person name="Benes V."/>
            <person name="Rechmann S."/>
            <person name="Borkova D."/>
            <person name="Bloecker H."/>
            <person name="Scharfe M."/>
            <person name="Grimm M."/>
            <person name="Loehnert T.-H."/>
            <person name="Dose S."/>
            <person name="de Haan M."/>
            <person name="Maarse A.C."/>
            <person name="Schaefer M."/>
            <person name="Mueller-Auer S."/>
            <person name="Gabel C."/>
            <person name="Fuchs M."/>
            <person name="Fartmann B."/>
            <person name="Granderath K."/>
            <person name="Dauner D."/>
            <person name="Herzl A."/>
            <person name="Neumann S."/>
            <person name="Argiriou A."/>
            <person name="Vitale D."/>
            <person name="Liguori R."/>
            <person name="Piravandi E."/>
            <person name="Massenet O."/>
            <person name="Quigley F."/>
            <person name="Clabauld G."/>
            <person name="Muendlein A."/>
            <person name="Felber R."/>
            <person name="Schnabl S."/>
            <person name="Hiller R."/>
            <person name="Schmidt W."/>
            <person name="Lecharny A."/>
            <person name="Aubourg S."/>
            <person name="Chefdor F."/>
            <person name="Cooke R."/>
            <person name="Berger C."/>
            <person name="Monfort A."/>
            <person name="Casacuberta E."/>
            <person name="Gibbons T."/>
            <person name="Weber N."/>
            <person name="Vandenbol M."/>
            <person name="Bargues M."/>
            <person name="Terol J."/>
            <person name="Torres A."/>
            <person name="Perez-Perez A."/>
            <person name="Purnelle B."/>
            <person name="Bent E."/>
            <person name="Johnson S."/>
            <person name="Tacon D."/>
            <person name="Jesse T."/>
            <person name="Heijnen L."/>
            <person name="Schwarz S."/>
            <person name="Scholler P."/>
            <person name="Heber S."/>
            <person name="Francs P."/>
            <person name="Bielke C."/>
            <person name="Frishman D."/>
            <person name="Haase D."/>
            <person name="Lemcke K."/>
            <person name="Mewes H.-W."/>
            <person name="Stocker S."/>
            <person name="Zaccaria P."/>
            <person name="Bevan M."/>
            <person name="Wilson R.K."/>
            <person name="de la Bastide M."/>
            <person name="Habermann K."/>
            <person name="Parnell L."/>
            <person name="Dedhia N."/>
            <person name="Gnoj L."/>
            <person name="Schutz K."/>
            <person name="Huang E."/>
            <person name="Spiegel L."/>
            <person name="Sekhon M."/>
            <person name="Murray J."/>
            <person name="Sheet P."/>
            <person name="Cordes M."/>
            <person name="Abu-Threideh J."/>
            <person name="Stoneking T."/>
            <person name="Kalicki J."/>
            <person name="Graves T."/>
            <person name="Harmon G."/>
            <person name="Edwards J."/>
            <person name="Latreille P."/>
            <person name="Courtney L."/>
            <person name="Cloud J."/>
            <person name="Abbott A."/>
            <person name="Scott K."/>
            <person name="Johnson D."/>
            <person name="Minx P."/>
            <person name="Bentley D."/>
            <person name="Fulton B."/>
            <person name="Miller N."/>
            <person name="Greco T."/>
            <person name="Kemp K."/>
            <person name="Kramer J."/>
            <person name="Fulton L."/>
            <person name="Mardis E."/>
            <person name="Dante M."/>
            <person name="Pepin K."/>
            <person name="Hillier L.W."/>
            <person name="Nelson J."/>
            <person name="Spieth J."/>
            <person name="Ryan E."/>
            <person name="Andrews S."/>
            <person name="Geisel C."/>
            <person name="Layman D."/>
            <person name="Du H."/>
            <person name="Ali J."/>
            <person name="Berghoff A."/>
            <person name="Jones K."/>
            <person name="Drone K."/>
            <person name="Cotton M."/>
            <person name="Joshu C."/>
            <person name="Antonoiu B."/>
            <person name="Zidanic M."/>
            <person name="Strong C."/>
            <person name="Sun H."/>
            <person name="Lamar B."/>
            <person name="Yordan C."/>
            <person name="Ma P."/>
            <person name="Zhong J."/>
            <person name="Preston R."/>
            <person name="Vil D."/>
            <person name="Shekher M."/>
            <person name="Matero A."/>
            <person name="Shah R."/>
            <person name="Swaby I.K."/>
            <person name="O'Shaughnessy A."/>
            <person name="Rodriguez M."/>
            <person name="Hoffman J."/>
            <person name="Till S."/>
            <person name="Granat S."/>
            <person name="Shohdy N."/>
            <person name="Hasegawa A."/>
            <person name="Hameed A."/>
            <person name="Lodhi M."/>
            <person name="Johnson A."/>
            <person name="Chen E."/>
            <person name="Marra M.A."/>
            <person name="Martienssen R."/>
            <person name="McCombie W.R."/>
        </authorList>
    </citation>
    <scope>NUCLEOTIDE SEQUENCE [LARGE SCALE GENOMIC DNA]</scope>
    <source>
        <strain>cv. Columbia</strain>
    </source>
</reference>
<reference key="3">
    <citation type="journal article" date="2017" name="Plant J.">
        <title>Araport11: a complete reannotation of the Arabidopsis thaliana reference genome.</title>
        <authorList>
            <person name="Cheng C.Y."/>
            <person name="Krishnakumar V."/>
            <person name="Chan A.P."/>
            <person name="Thibaud-Nissen F."/>
            <person name="Schobel S."/>
            <person name="Town C.D."/>
        </authorList>
    </citation>
    <scope>GENOME REANNOTATION</scope>
    <source>
        <strain>cv. Columbia</strain>
    </source>
</reference>
<reference key="4">
    <citation type="journal article" date="2003" name="Science">
        <title>Empirical analysis of transcriptional activity in the Arabidopsis genome.</title>
        <authorList>
            <person name="Yamada K."/>
            <person name="Lim J."/>
            <person name="Dale J.M."/>
            <person name="Chen H."/>
            <person name="Shinn P."/>
            <person name="Palm C.J."/>
            <person name="Southwick A.M."/>
            <person name="Wu H.C."/>
            <person name="Kim C.J."/>
            <person name="Nguyen M."/>
            <person name="Pham P.K."/>
            <person name="Cheuk R.F."/>
            <person name="Karlin-Newmann G."/>
            <person name="Liu S.X."/>
            <person name="Lam B."/>
            <person name="Sakano H."/>
            <person name="Wu T."/>
            <person name="Yu G."/>
            <person name="Miranda M."/>
            <person name="Quach H.L."/>
            <person name="Tripp M."/>
            <person name="Chang C.H."/>
            <person name="Lee J.M."/>
            <person name="Toriumi M.J."/>
            <person name="Chan M.M."/>
            <person name="Tang C.C."/>
            <person name="Onodera C.S."/>
            <person name="Deng J.M."/>
            <person name="Akiyama K."/>
            <person name="Ansari Y."/>
            <person name="Arakawa T."/>
            <person name="Banh J."/>
            <person name="Banno F."/>
            <person name="Bowser L."/>
            <person name="Brooks S.Y."/>
            <person name="Carninci P."/>
            <person name="Chao Q."/>
            <person name="Choy N."/>
            <person name="Enju A."/>
            <person name="Goldsmith A.D."/>
            <person name="Gurjal M."/>
            <person name="Hansen N.F."/>
            <person name="Hayashizaki Y."/>
            <person name="Johnson-Hopson C."/>
            <person name="Hsuan V.W."/>
            <person name="Iida K."/>
            <person name="Karnes M."/>
            <person name="Khan S."/>
            <person name="Koesema E."/>
            <person name="Ishida J."/>
            <person name="Jiang P.X."/>
            <person name="Jones T."/>
            <person name="Kawai J."/>
            <person name="Kamiya A."/>
            <person name="Meyers C."/>
            <person name="Nakajima M."/>
            <person name="Narusaka M."/>
            <person name="Seki M."/>
            <person name="Sakurai T."/>
            <person name="Satou M."/>
            <person name="Tamse R."/>
            <person name="Vaysberg M."/>
            <person name="Wallender E.K."/>
            <person name="Wong C."/>
            <person name="Yamamura Y."/>
            <person name="Yuan S."/>
            <person name="Shinozaki K."/>
            <person name="Davis R.W."/>
            <person name="Theologis A."/>
            <person name="Ecker J.R."/>
        </authorList>
    </citation>
    <scope>NUCLEOTIDE SEQUENCE [LARGE SCALE MRNA]</scope>
    <source>
        <strain>cv. Columbia</strain>
    </source>
</reference>
<reference key="5">
    <citation type="submission" date="2006-07" db="EMBL/GenBank/DDBJ databases">
        <title>Large-scale analysis of RIKEN Arabidopsis full-length (RAFL) cDNAs.</title>
        <authorList>
            <person name="Totoki Y."/>
            <person name="Seki M."/>
            <person name="Ishida J."/>
            <person name="Nakajima M."/>
            <person name="Enju A."/>
            <person name="Kamiya A."/>
            <person name="Narusaka M."/>
            <person name="Shin-i T."/>
            <person name="Nakagawa M."/>
            <person name="Sakamoto N."/>
            <person name="Oishi K."/>
            <person name="Kohara Y."/>
            <person name="Kobayashi M."/>
            <person name="Toyoda A."/>
            <person name="Sakaki Y."/>
            <person name="Sakurai T."/>
            <person name="Iida K."/>
            <person name="Akiyama K."/>
            <person name="Satou M."/>
            <person name="Toyoda T."/>
            <person name="Konagaya A."/>
            <person name="Carninci P."/>
            <person name="Kawai J."/>
            <person name="Hayashizaki Y."/>
            <person name="Shinozaki K."/>
        </authorList>
    </citation>
    <scope>NUCLEOTIDE SEQUENCE [LARGE SCALE MRNA]</scope>
    <source>
        <strain>cv. Columbia</strain>
    </source>
</reference>
<reference key="6">
    <citation type="journal article" date="2009" name="Proc. Natl. Acad. Sci. U.S.A.">
        <title>SOBER1 phospholipase activity suppresses phosphatidic acid accumulation and plant immunity in response to bacterial effector AvrBsT.</title>
        <authorList>
            <person name="Kirik A."/>
            <person name="Mudgett M.B."/>
        </authorList>
    </citation>
    <scope>FUNCTION</scope>
    <scope>MUTAGENESIS OF HIS-192</scope>
</reference>
<accession>Q84WK4</accession>
<accession>A4KWB0</accession>
<accession>O49635</accession>